<accession>P0C8F3</accession>
<reference key="1">
    <citation type="submission" date="2003-03" db="EMBL/GenBank/DDBJ databases">
        <title>African swine fever virus genomes.</title>
        <authorList>
            <person name="Kutish G.F."/>
            <person name="Rock D.L."/>
        </authorList>
    </citation>
    <scope>NUCLEOTIDE SEQUENCE [LARGE SCALE GENOMIC DNA]</scope>
</reference>
<dbReference type="EC" id="2.7.11.1"/>
<dbReference type="EMBL" id="AY261366">
    <property type="status" value="NOT_ANNOTATED_CDS"/>
    <property type="molecule type" value="Genomic_DNA"/>
</dbReference>
<dbReference type="SMR" id="P0C8F3"/>
<dbReference type="Proteomes" id="UP000000858">
    <property type="component" value="Segment"/>
</dbReference>
<dbReference type="GO" id="GO:0030430">
    <property type="term" value="C:host cell cytoplasm"/>
    <property type="evidence" value="ECO:0007669"/>
    <property type="project" value="UniProtKB-SubCell"/>
</dbReference>
<dbReference type="GO" id="GO:0044423">
    <property type="term" value="C:virion component"/>
    <property type="evidence" value="ECO:0007669"/>
    <property type="project" value="UniProtKB-KW"/>
</dbReference>
<dbReference type="GO" id="GO:0005524">
    <property type="term" value="F:ATP binding"/>
    <property type="evidence" value="ECO:0007669"/>
    <property type="project" value="UniProtKB-KW"/>
</dbReference>
<dbReference type="GO" id="GO:0106310">
    <property type="term" value="F:protein serine kinase activity"/>
    <property type="evidence" value="ECO:0007669"/>
    <property type="project" value="RHEA"/>
</dbReference>
<dbReference type="GO" id="GO:0004674">
    <property type="term" value="F:protein serine/threonine kinase activity"/>
    <property type="evidence" value="ECO:0007669"/>
    <property type="project" value="UniProtKB-KW"/>
</dbReference>
<dbReference type="Gene3D" id="1.10.510.10">
    <property type="entry name" value="Transferase(Phosphotransferase) domain 1"/>
    <property type="match status" value="1"/>
</dbReference>
<dbReference type="InterPro" id="IPR011009">
    <property type="entry name" value="Kinase-like_dom_sf"/>
</dbReference>
<dbReference type="InterPro" id="IPR051138">
    <property type="entry name" value="PIM_Ser/Thr_kinase"/>
</dbReference>
<dbReference type="InterPro" id="IPR000719">
    <property type="entry name" value="Prot_kinase_dom"/>
</dbReference>
<dbReference type="InterPro" id="IPR008271">
    <property type="entry name" value="Ser/Thr_kinase_AS"/>
</dbReference>
<dbReference type="PANTHER" id="PTHR22984:SF25">
    <property type="entry name" value="PROTEIN KINASE DOMAIN-CONTAINING PROTEIN"/>
    <property type="match status" value="1"/>
</dbReference>
<dbReference type="PANTHER" id="PTHR22984">
    <property type="entry name" value="SERINE/THREONINE-PROTEIN KINASE PIM"/>
    <property type="match status" value="1"/>
</dbReference>
<dbReference type="Pfam" id="PF00069">
    <property type="entry name" value="Pkinase"/>
    <property type="match status" value="1"/>
</dbReference>
<dbReference type="SMART" id="SM00220">
    <property type="entry name" value="S_TKc"/>
    <property type="match status" value="1"/>
</dbReference>
<dbReference type="SUPFAM" id="SSF56112">
    <property type="entry name" value="Protein kinase-like (PK-like)"/>
    <property type="match status" value="1"/>
</dbReference>
<dbReference type="PROSITE" id="PS50011">
    <property type="entry name" value="PROTEIN_KINASE_DOM"/>
    <property type="match status" value="1"/>
</dbReference>
<dbReference type="PROSITE" id="PS00108">
    <property type="entry name" value="PROTEIN_KINASE_ST"/>
    <property type="match status" value="1"/>
</dbReference>
<name>PK1_ASFWA</name>
<evidence type="ECO:0000250" key="1"/>
<evidence type="ECO:0000250" key="2">
    <source>
        <dbReference type="UniProtKB" id="P34206"/>
    </source>
</evidence>
<evidence type="ECO:0000255" key="3">
    <source>
        <dbReference type="PROSITE-ProRule" id="PRU00159"/>
    </source>
</evidence>
<evidence type="ECO:0000255" key="4">
    <source>
        <dbReference type="PROSITE-ProRule" id="PRU10027"/>
    </source>
</evidence>
<evidence type="ECO:0000305" key="5"/>
<sequence>MSRPEQQLKKMLKNPQAQYAVYPTAKVERISTTQHMYFIATRPMFEGGRNNVFLGHQVGQPIIFKYVSKKEIPGNEVIVLKALQDTPGVIKLIEYTENAMYHILIIEYIPNSVDLLHYHYFKKLEETEAKKIIFQLILIIQNIYEKGFIHGDIKDENLIIDINQKIIKVIDFGSAVRLDETRPQYNMFGTWEYVCPEFYYYGYYYQLPLTVWTIGMVAVNLFRFRAENFYLNDILKGENYIPENISETGKQFITDCLTINENKRLSFKSLVSHPWFKGLKKEIQPISELGVDYKNVIT</sequence>
<gene>
    <name type="ordered locus">War-131</name>
</gene>
<feature type="chain" id="PRO_0000355058" description="Serine/threonine-protein kinase 1">
    <location>
        <begin position="1"/>
        <end position="298"/>
    </location>
</feature>
<feature type="domain" description="Protein kinase" evidence="3">
    <location>
        <begin position="38"/>
        <end position="276"/>
    </location>
</feature>
<feature type="active site" description="Proton acceptor" evidence="3 4">
    <location>
        <position position="152"/>
    </location>
</feature>
<feature type="binding site" evidence="3">
    <location>
        <begin position="44"/>
        <end position="52"/>
    </location>
    <ligand>
        <name>ATP</name>
        <dbReference type="ChEBI" id="CHEBI:30616"/>
    </ligand>
</feature>
<feature type="binding site" evidence="3">
    <location>
        <position position="65"/>
    </location>
    <ligand>
        <name>ATP</name>
        <dbReference type="ChEBI" id="CHEBI:30616"/>
    </ligand>
</feature>
<keyword id="KW-0067">ATP-binding</keyword>
<keyword id="KW-1035">Host cytoplasm</keyword>
<keyword id="KW-0418">Kinase</keyword>
<keyword id="KW-0426">Late protein</keyword>
<keyword id="KW-0547">Nucleotide-binding</keyword>
<keyword id="KW-0723">Serine/threonine-protein kinase</keyword>
<keyword id="KW-0808">Transferase</keyword>
<keyword id="KW-0946">Virion</keyword>
<proteinExistence type="inferred from homology"/>
<organismHost>
    <name type="scientific">Ornithodoros</name>
    <name type="common">relapsing fever ticks</name>
    <dbReference type="NCBI Taxonomy" id="6937"/>
</organismHost>
<organismHost>
    <name type="scientific">Phacochoerus aethiopicus</name>
    <name type="common">Warthog</name>
    <dbReference type="NCBI Taxonomy" id="85517"/>
</organismHost>
<organismHost>
    <name type="scientific">Phacochoerus africanus</name>
    <name type="common">Warthog</name>
    <dbReference type="NCBI Taxonomy" id="41426"/>
</organismHost>
<organismHost>
    <name type="scientific">Potamochoerus larvatus</name>
    <name type="common">Bushpig</name>
    <dbReference type="NCBI Taxonomy" id="273792"/>
</organismHost>
<organismHost>
    <name type="scientific">Sus scrofa</name>
    <name type="common">Pig</name>
    <dbReference type="NCBI Taxonomy" id="9823"/>
</organismHost>
<protein>
    <recommendedName>
        <fullName>Serine/threonine-protein kinase 1</fullName>
        <ecNumber>2.7.11.1</ecNumber>
    </recommendedName>
</protein>
<organism>
    <name type="scientific">African swine fever virus (isolate Warthog/Namibia/Wart80/1980)</name>
    <name type="common">ASFV</name>
    <dbReference type="NCBI Taxonomy" id="561444"/>
    <lineage>
        <taxon>Viruses</taxon>
        <taxon>Varidnaviria</taxon>
        <taxon>Bamfordvirae</taxon>
        <taxon>Nucleocytoviricota</taxon>
        <taxon>Pokkesviricetes</taxon>
        <taxon>Asfuvirales</taxon>
        <taxon>Asfarviridae</taxon>
        <taxon>Asfivirus</taxon>
        <taxon>African swine fever virus</taxon>
    </lineage>
</organism>
<comment type="function">
    <text evidence="2">Essential for viral replication. It may mediate the virus progression through DNA replication.</text>
</comment>
<comment type="catalytic activity">
    <reaction>
        <text>L-seryl-[protein] + ATP = O-phospho-L-seryl-[protein] + ADP + H(+)</text>
        <dbReference type="Rhea" id="RHEA:17989"/>
        <dbReference type="Rhea" id="RHEA-COMP:9863"/>
        <dbReference type="Rhea" id="RHEA-COMP:11604"/>
        <dbReference type="ChEBI" id="CHEBI:15378"/>
        <dbReference type="ChEBI" id="CHEBI:29999"/>
        <dbReference type="ChEBI" id="CHEBI:30616"/>
        <dbReference type="ChEBI" id="CHEBI:83421"/>
        <dbReference type="ChEBI" id="CHEBI:456216"/>
        <dbReference type="EC" id="2.7.11.1"/>
    </reaction>
</comment>
<comment type="catalytic activity">
    <reaction>
        <text>L-threonyl-[protein] + ATP = O-phospho-L-threonyl-[protein] + ADP + H(+)</text>
        <dbReference type="Rhea" id="RHEA:46608"/>
        <dbReference type="Rhea" id="RHEA-COMP:11060"/>
        <dbReference type="Rhea" id="RHEA-COMP:11605"/>
        <dbReference type="ChEBI" id="CHEBI:15378"/>
        <dbReference type="ChEBI" id="CHEBI:30013"/>
        <dbReference type="ChEBI" id="CHEBI:30616"/>
        <dbReference type="ChEBI" id="CHEBI:61977"/>
        <dbReference type="ChEBI" id="CHEBI:456216"/>
        <dbReference type="EC" id="2.7.11.1"/>
    </reaction>
</comment>
<comment type="subcellular location">
    <subcellularLocation>
        <location evidence="2">Virion</location>
    </subcellularLocation>
    <subcellularLocation>
        <location evidence="1">Host cytoplasm</location>
    </subcellularLocation>
</comment>
<comment type="induction">
    <text evidence="5">Expressed in the late phase of the viral replicative cycle.</text>
</comment>
<comment type="similarity">
    <text evidence="3">Belongs to the protein kinase superfamily. Ser/Thr protein kinase family.</text>
</comment>